<accession>P26990</accession>
<gene>
    <name type="primary">ARF6</name>
    <name evidence="4" type="synonym">CPS1</name>
</gene>
<feature type="initiator methionine" description="Removed" evidence="1">
    <location>
        <position position="1"/>
    </location>
</feature>
<feature type="chain" id="PRO_0000207403" description="ADP-ribosylation factor 6">
    <location>
        <begin position="2"/>
        <end position="175"/>
    </location>
</feature>
<feature type="binding site" evidence="1">
    <location>
        <begin position="23"/>
        <end position="28"/>
    </location>
    <ligand>
        <name>GTP</name>
        <dbReference type="ChEBI" id="CHEBI:37565"/>
    </ligand>
</feature>
<feature type="binding site" evidence="1">
    <location>
        <begin position="41"/>
        <end position="44"/>
    </location>
    <ligand>
        <name>GTP</name>
        <dbReference type="ChEBI" id="CHEBI:37565"/>
    </ligand>
</feature>
<feature type="binding site" evidence="1">
    <location>
        <begin position="63"/>
        <end position="67"/>
    </location>
    <ligand>
        <name>GTP</name>
        <dbReference type="ChEBI" id="CHEBI:37565"/>
    </ligand>
</feature>
<feature type="binding site" evidence="1">
    <location>
        <begin position="122"/>
        <end position="125"/>
    </location>
    <ligand>
        <name>GTP</name>
        <dbReference type="ChEBI" id="CHEBI:37565"/>
    </ligand>
</feature>
<feature type="binding site" evidence="1">
    <location>
        <begin position="155"/>
        <end position="156"/>
    </location>
    <ligand>
        <name>GTP</name>
        <dbReference type="ChEBI" id="CHEBI:37565"/>
    </ligand>
</feature>
<feature type="lipid moiety-binding region" description="N-myristoyl glycine" evidence="1">
    <location>
        <position position="2"/>
    </location>
</feature>
<feature type="lipid moiety-binding region" description="N6-myristoyl lysine" evidence="1">
    <location>
        <position position="3"/>
    </location>
</feature>
<dbReference type="EC" id="3.6.5.2" evidence="1"/>
<dbReference type="EMBL" id="X03682">
    <property type="protein sequence ID" value="CAA27317.1"/>
    <property type="molecule type" value="Genomic_DNA"/>
</dbReference>
<dbReference type="PIR" id="I50632">
    <property type="entry name" value="I50632"/>
</dbReference>
<dbReference type="RefSeq" id="NP_001075174.1">
    <property type="nucleotide sequence ID" value="NM_001081705.2"/>
</dbReference>
<dbReference type="SMR" id="P26990"/>
<dbReference type="FunCoup" id="P26990">
    <property type="interactions" value="2749"/>
</dbReference>
<dbReference type="IntAct" id="P26990">
    <property type="interactions" value="2"/>
</dbReference>
<dbReference type="MINT" id="P26990"/>
<dbReference type="STRING" id="9031.ENSGALP00000041604"/>
<dbReference type="PaxDb" id="9031-ENSGALP00000041604"/>
<dbReference type="Ensembl" id="ENSGALT00010046410.1">
    <property type="protein sequence ID" value="ENSGALP00010027629.1"/>
    <property type="gene ID" value="ENSGALG00010019204.1"/>
</dbReference>
<dbReference type="Ensembl" id="ENSGALT00010046411.1">
    <property type="protein sequence ID" value="ENSGALP00010027630.1"/>
    <property type="gene ID" value="ENSGALG00010019204.1"/>
</dbReference>
<dbReference type="Ensembl" id="ENSGALT00010046412.1">
    <property type="protein sequence ID" value="ENSGALP00010027631.1"/>
    <property type="gene ID" value="ENSGALG00010019204.1"/>
</dbReference>
<dbReference type="GeneID" id="428927"/>
<dbReference type="KEGG" id="gga:428927"/>
<dbReference type="CTD" id="382"/>
<dbReference type="VEuPathDB" id="HostDB:geneid_428927"/>
<dbReference type="eggNOG" id="KOG0071">
    <property type="taxonomic scope" value="Eukaryota"/>
</dbReference>
<dbReference type="GeneTree" id="ENSGT00940000156593"/>
<dbReference type="HOGENOM" id="CLU_040729_9_3_1"/>
<dbReference type="InParanoid" id="P26990"/>
<dbReference type="OMA" id="GGQISKM"/>
<dbReference type="OrthoDB" id="2011769at2759"/>
<dbReference type="PhylomeDB" id="P26990"/>
<dbReference type="Reactome" id="R-GGA-8854214">
    <property type="pathway name" value="TBC/RABGAPs"/>
</dbReference>
<dbReference type="Reactome" id="R-GGA-8875656">
    <property type="pathway name" value="MET receptor recycling"/>
</dbReference>
<dbReference type="PRO" id="PR:P26990"/>
<dbReference type="Proteomes" id="UP000000539">
    <property type="component" value="Chromosome 5"/>
</dbReference>
<dbReference type="Bgee" id="ENSGALG00000026944">
    <property type="expression patterns" value="Expressed in granulocyte and 12 other cell types or tissues"/>
</dbReference>
<dbReference type="GO" id="GO:0005938">
    <property type="term" value="C:cell cortex"/>
    <property type="evidence" value="ECO:0000250"/>
    <property type="project" value="AgBase"/>
</dbReference>
<dbReference type="GO" id="GO:0032154">
    <property type="term" value="C:cleavage furrow"/>
    <property type="evidence" value="ECO:0007669"/>
    <property type="project" value="UniProtKB-SubCell"/>
</dbReference>
<dbReference type="GO" id="GO:0005737">
    <property type="term" value="C:cytoplasm"/>
    <property type="evidence" value="ECO:0000314"/>
    <property type="project" value="AgBase"/>
</dbReference>
<dbReference type="GO" id="GO:0005829">
    <property type="term" value="C:cytosol"/>
    <property type="evidence" value="ECO:0000250"/>
    <property type="project" value="UniProtKB"/>
</dbReference>
<dbReference type="GO" id="GO:0030139">
    <property type="term" value="C:endocytic vesicle"/>
    <property type="evidence" value="ECO:0000250"/>
    <property type="project" value="UniProtKB"/>
</dbReference>
<dbReference type="GO" id="GO:0005768">
    <property type="term" value="C:endosome"/>
    <property type="evidence" value="ECO:0000250"/>
    <property type="project" value="UniProtKB"/>
</dbReference>
<dbReference type="GO" id="GO:0031527">
    <property type="term" value="C:filopodium membrane"/>
    <property type="evidence" value="ECO:0007669"/>
    <property type="project" value="UniProtKB-SubCell"/>
</dbReference>
<dbReference type="GO" id="GO:0090543">
    <property type="term" value="C:Flemming body"/>
    <property type="evidence" value="ECO:0007669"/>
    <property type="project" value="UniProtKB-SubCell"/>
</dbReference>
<dbReference type="GO" id="GO:0005794">
    <property type="term" value="C:Golgi apparatus"/>
    <property type="evidence" value="ECO:0007669"/>
    <property type="project" value="Ensembl"/>
</dbReference>
<dbReference type="GO" id="GO:0005886">
    <property type="term" value="C:plasma membrane"/>
    <property type="evidence" value="ECO:0000250"/>
    <property type="project" value="UniProtKB"/>
</dbReference>
<dbReference type="GO" id="GO:0055038">
    <property type="term" value="C:recycling endosome membrane"/>
    <property type="evidence" value="ECO:0000318"/>
    <property type="project" value="GO_Central"/>
</dbReference>
<dbReference type="GO" id="GO:0001726">
    <property type="term" value="C:ruffle"/>
    <property type="evidence" value="ECO:0000250"/>
    <property type="project" value="AgBase"/>
</dbReference>
<dbReference type="GO" id="GO:0032587">
    <property type="term" value="C:ruffle membrane"/>
    <property type="evidence" value="ECO:0000314"/>
    <property type="project" value="AgBase"/>
</dbReference>
<dbReference type="GO" id="GO:0003925">
    <property type="term" value="F:G protein activity"/>
    <property type="evidence" value="ECO:0000250"/>
    <property type="project" value="UniProtKB"/>
</dbReference>
<dbReference type="GO" id="GO:0019003">
    <property type="term" value="F:GDP binding"/>
    <property type="evidence" value="ECO:0000250"/>
    <property type="project" value="UniProtKB"/>
</dbReference>
<dbReference type="GO" id="GO:0005525">
    <property type="term" value="F:GTP binding"/>
    <property type="evidence" value="ECO:0000250"/>
    <property type="project" value="UniProtKB"/>
</dbReference>
<dbReference type="GO" id="GO:0035591">
    <property type="term" value="F:signaling adaptor activity"/>
    <property type="evidence" value="ECO:0007669"/>
    <property type="project" value="Ensembl"/>
</dbReference>
<dbReference type="GO" id="GO:0031996">
    <property type="term" value="F:thioesterase binding"/>
    <property type="evidence" value="ECO:0007669"/>
    <property type="project" value="Ensembl"/>
</dbReference>
<dbReference type="GO" id="GO:0030154">
    <property type="term" value="P:cell differentiation"/>
    <property type="evidence" value="ECO:0007669"/>
    <property type="project" value="UniProtKB-KW"/>
</dbReference>
<dbReference type="GO" id="GO:0030866">
    <property type="term" value="P:cortical actin cytoskeleton organization"/>
    <property type="evidence" value="ECO:0000250"/>
    <property type="project" value="AgBase"/>
</dbReference>
<dbReference type="GO" id="GO:0032456">
    <property type="term" value="P:endocytic recycling"/>
    <property type="evidence" value="ECO:0007669"/>
    <property type="project" value="Ensembl"/>
</dbReference>
<dbReference type="GO" id="GO:1902217">
    <property type="term" value="P:erythrocyte apoptotic process"/>
    <property type="evidence" value="ECO:0007669"/>
    <property type="project" value="Ensembl"/>
</dbReference>
<dbReference type="GO" id="GO:0090162">
    <property type="term" value="P:establishment of epithelial cell polarity"/>
    <property type="evidence" value="ECO:0007669"/>
    <property type="project" value="Ensembl"/>
</dbReference>
<dbReference type="GO" id="GO:0097284">
    <property type="term" value="P:hepatocyte apoptotic process"/>
    <property type="evidence" value="ECO:0007669"/>
    <property type="project" value="Ensembl"/>
</dbReference>
<dbReference type="GO" id="GO:0006886">
    <property type="term" value="P:intracellular protein transport"/>
    <property type="evidence" value="ECO:0000318"/>
    <property type="project" value="GO_Central"/>
</dbReference>
<dbReference type="GO" id="GO:0001889">
    <property type="term" value="P:liver development"/>
    <property type="evidence" value="ECO:0007669"/>
    <property type="project" value="Ensembl"/>
</dbReference>
<dbReference type="GO" id="GO:2000009">
    <property type="term" value="P:negative regulation of protein localization to cell surface"/>
    <property type="evidence" value="ECO:0007669"/>
    <property type="project" value="Ensembl"/>
</dbReference>
<dbReference type="GO" id="GO:0007399">
    <property type="term" value="P:nervous system development"/>
    <property type="evidence" value="ECO:0007669"/>
    <property type="project" value="UniProtKB-KW"/>
</dbReference>
<dbReference type="GO" id="GO:0030838">
    <property type="term" value="P:positive regulation of actin filament polymerization"/>
    <property type="evidence" value="ECO:0000250"/>
    <property type="project" value="AgBase"/>
</dbReference>
<dbReference type="GO" id="GO:0120183">
    <property type="term" value="P:positive regulation of focal adhesion disassembly"/>
    <property type="evidence" value="ECO:0007669"/>
    <property type="project" value="Ensembl"/>
</dbReference>
<dbReference type="GO" id="GO:0051549">
    <property type="term" value="P:positive regulation of keratinocyte migration"/>
    <property type="evidence" value="ECO:0007669"/>
    <property type="project" value="Ensembl"/>
</dbReference>
<dbReference type="GO" id="GO:1903438">
    <property type="term" value="P:positive regulation of mitotic cytokinetic process"/>
    <property type="evidence" value="ECO:0007669"/>
    <property type="project" value="Ensembl"/>
</dbReference>
<dbReference type="GO" id="GO:0010976">
    <property type="term" value="P:positive regulation of neuron projection development"/>
    <property type="evidence" value="ECO:0007669"/>
    <property type="project" value="Ensembl"/>
</dbReference>
<dbReference type="GO" id="GO:1903078">
    <property type="term" value="P:positive regulation of protein localization to plasma membrane"/>
    <property type="evidence" value="ECO:0007669"/>
    <property type="project" value="Ensembl"/>
</dbReference>
<dbReference type="GO" id="GO:0050714">
    <property type="term" value="P:positive regulation of protein secretion"/>
    <property type="evidence" value="ECO:0007669"/>
    <property type="project" value="Ensembl"/>
</dbReference>
<dbReference type="GO" id="GO:0034394">
    <property type="term" value="P:protein localization to cell surface"/>
    <property type="evidence" value="ECO:0007669"/>
    <property type="project" value="Ensembl"/>
</dbReference>
<dbReference type="GO" id="GO:1905345">
    <property type="term" value="P:protein localization to cleavage furrow"/>
    <property type="evidence" value="ECO:0007669"/>
    <property type="project" value="Ensembl"/>
</dbReference>
<dbReference type="GO" id="GO:0036010">
    <property type="term" value="P:protein localization to endosome"/>
    <property type="evidence" value="ECO:0000318"/>
    <property type="project" value="GO_Central"/>
</dbReference>
<dbReference type="GO" id="GO:0072659">
    <property type="term" value="P:protein localization to plasma membrane"/>
    <property type="evidence" value="ECO:0007669"/>
    <property type="project" value="Ensembl"/>
</dbReference>
<dbReference type="GO" id="GO:0060998">
    <property type="term" value="P:regulation of dendritic spine development"/>
    <property type="evidence" value="ECO:0000318"/>
    <property type="project" value="GO_Central"/>
</dbReference>
<dbReference type="GO" id="GO:0051489">
    <property type="term" value="P:regulation of filopodium assembly"/>
    <property type="evidence" value="ECO:0007669"/>
    <property type="project" value="Ensembl"/>
</dbReference>
<dbReference type="GO" id="GO:0035020">
    <property type="term" value="P:regulation of Rac protein signal transduction"/>
    <property type="evidence" value="ECO:0000250"/>
    <property type="project" value="AgBase"/>
</dbReference>
<dbReference type="GO" id="GO:0097178">
    <property type="term" value="P:ruffle assembly"/>
    <property type="evidence" value="ECO:0000250"/>
    <property type="project" value="AgBase"/>
</dbReference>
<dbReference type="GO" id="GO:0016192">
    <property type="term" value="P:vesicle-mediated transport"/>
    <property type="evidence" value="ECO:0000318"/>
    <property type="project" value="GO_Central"/>
</dbReference>
<dbReference type="CDD" id="cd04149">
    <property type="entry name" value="Arf6"/>
    <property type="match status" value="1"/>
</dbReference>
<dbReference type="FunFam" id="3.40.50.300:FF:000286">
    <property type="entry name" value="ADP-ribosylation factor 6"/>
    <property type="match status" value="1"/>
</dbReference>
<dbReference type="Gene3D" id="3.40.50.300">
    <property type="entry name" value="P-loop containing nucleotide triphosphate hydrolases"/>
    <property type="match status" value="1"/>
</dbReference>
<dbReference type="InterPro" id="IPR041838">
    <property type="entry name" value="Arf6"/>
</dbReference>
<dbReference type="InterPro" id="IPR027417">
    <property type="entry name" value="P-loop_NTPase"/>
</dbReference>
<dbReference type="InterPro" id="IPR005225">
    <property type="entry name" value="Small_GTP-bd"/>
</dbReference>
<dbReference type="InterPro" id="IPR024156">
    <property type="entry name" value="Small_GTPase_ARF"/>
</dbReference>
<dbReference type="InterPro" id="IPR006689">
    <property type="entry name" value="Small_GTPase_ARF/SAR"/>
</dbReference>
<dbReference type="NCBIfam" id="TIGR00231">
    <property type="entry name" value="small_GTP"/>
    <property type="match status" value="1"/>
</dbReference>
<dbReference type="PANTHER" id="PTHR11711">
    <property type="entry name" value="ADP RIBOSYLATION FACTOR-RELATED"/>
    <property type="match status" value="1"/>
</dbReference>
<dbReference type="Pfam" id="PF00025">
    <property type="entry name" value="Arf"/>
    <property type="match status" value="1"/>
</dbReference>
<dbReference type="PRINTS" id="PR00328">
    <property type="entry name" value="SAR1GTPBP"/>
</dbReference>
<dbReference type="SMART" id="SM00177">
    <property type="entry name" value="ARF"/>
    <property type="match status" value="1"/>
</dbReference>
<dbReference type="SMART" id="SM00175">
    <property type="entry name" value="RAB"/>
    <property type="match status" value="1"/>
</dbReference>
<dbReference type="SMART" id="SM00178">
    <property type="entry name" value="SAR"/>
    <property type="match status" value="1"/>
</dbReference>
<dbReference type="SUPFAM" id="SSF52540">
    <property type="entry name" value="P-loop containing nucleoside triphosphate hydrolases"/>
    <property type="match status" value="1"/>
</dbReference>
<dbReference type="PROSITE" id="PS51417">
    <property type="entry name" value="ARF"/>
    <property type="match status" value="1"/>
</dbReference>
<keyword id="KW-1003">Cell membrane</keyword>
<keyword id="KW-0966">Cell projection</keyword>
<keyword id="KW-0963">Cytoplasm</keyword>
<keyword id="KW-0221">Differentiation</keyword>
<keyword id="KW-0967">Endosome</keyword>
<keyword id="KW-0342">GTP-binding</keyword>
<keyword id="KW-0378">Hydrolase</keyword>
<keyword id="KW-0449">Lipoprotein</keyword>
<keyword id="KW-0472">Membrane</keyword>
<keyword id="KW-0519">Myristate</keyword>
<keyword id="KW-0524">Neurogenesis</keyword>
<keyword id="KW-0547">Nucleotide-binding</keyword>
<keyword id="KW-0653">Protein transport</keyword>
<keyword id="KW-1185">Reference proteome</keyword>
<keyword id="KW-0813">Transport</keyword>
<sequence length="175" mass="20096">MGKVLSKIFGNKEMRILMLGLDAAGKTTILYKLKLGQSVTTIPTVGFNVETVTYKNVKFNVWDVGGQDKIRPLWRHYYTGTQGLIFVVDCADRDRIDEARQELHRIINDREMRDAIILIFANKQDLPDAMKPHEIQEKLGLTRIRDRNWYVQPSCATTGDGLYEGLTWLTSNYKS</sequence>
<reference key="1">
    <citation type="journal article" date="1986" name="Nucleic Acids Res.">
        <title>A processed chicken pseudogene (CPS1) related to the ras oncogene superfamily.</title>
        <authorList>
            <person name="Alsip G.R."/>
            <person name="Konkel D.A."/>
        </authorList>
    </citation>
    <scope>NUCLEOTIDE SEQUENCE [GENOMIC DNA]</scope>
    <scope>DEVELOPMENTAL STAGE</scope>
</reference>
<evidence type="ECO:0000250" key="1">
    <source>
        <dbReference type="UniProtKB" id="P62330"/>
    </source>
</evidence>
<evidence type="ECO:0000250" key="2">
    <source>
        <dbReference type="UniProtKB" id="P62331"/>
    </source>
</evidence>
<evidence type="ECO:0000269" key="3">
    <source>
    </source>
</evidence>
<evidence type="ECO:0000303" key="4">
    <source>
    </source>
</evidence>
<evidence type="ECO:0000305" key="5"/>
<comment type="function">
    <text evidence="1">GTP-binding protein involved in protein trafficking; regulates endocytic recycling and cytoskeleton remodeling. May modulate vesicle budding and uncoating within the Golgi apparatus. May contribute to the regulation of dendritic branching, filopodia extension and dendritic spine development (By similarity).</text>
</comment>
<comment type="catalytic activity">
    <reaction evidence="1">
        <text>GTP + H2O = GDP + phosphate + H(+)</text>
        <dbReference type="Rhea" id="RHEA:19669"/>
        <dbReference type="ChEBI" id="CHEBI:15377"/>
        <dbReference type="ChEBI" id="CHEBI:15378"/>
        <dbReference type="ChEBI" id="CHEBI:37565"/>
        <dbReference type="ChEBI" id="CHEBI:43474"/>
        <dbReference type="ChEBI" id="CHEBI:58189"/>
        <dbReference type="EC" id="3.6.5.2"/>
    </reaction>
    <physiologicalReaction direction="left-to-right" evidence="1">
        <dbReference type="Rhea" id="RHEA:19670"/>
    </physiologicalReaction>
</comment>
<comment type="subcellular location">
    <subcellularLocation>
        <location evidence="1">Cytoplasm</location>
        <location evidence="1">Cytosol</location>
    </subcellularLocation>
    <subcellularLocation>
        <location evidence="2">Cell membrane</location>
        <topology evidence="1">Lipid-anchor</topology>
    </subcellularLocation>
    <subcellularLocation>
        <location evidence="2">Endosome membrane</location>
        <topology evidence="1">Lipid-anchor</topology>
    </subcellularLocation>
    <subcellularLocation>
        <location evidence="2">Recycling endosome membrane</location>
        <topology evidence="2">Lipid-anchor</topology>
    </subcellularLocation>
    <subcellularLocation>
        <location evidence="2">Cell projection</location>
        <location evidence="2">Filopodium membrane</location>
        <topology evidence="2">Lipid-anchor</topology>
    </subcellularLocation>
    <subcellularLocation>
        <location evidence="1">Cell projection</location>
        <location evidence="1">Ruffle</location>
    </subcellularLocation>
    <subcellularLocation>
        <location evidence="1">Cleavage furrow</location>
    </subcellularLocation>
    <subcellularLocation>
        <location evidence="2">Midbody</location>
        <location evidence="2">Midbody ring</location>
    </subcellularLocation>
    <text evidence="1 2">Distributed uniformly on the plasma membrane, as well as throughout the cytoplasm during metaphase. Subsequently concentrated at patches in the equatorial region at the onset of cytokinesis, and becomes distributed in the equatorial region concurrent with cleavage furrow ingression. In late stages of cytokinesis, concentrates at the midbody ring/Flemming body. After abscission of the intercellular bridge, incorporated into one of the daughter cells as a midbody remnant and localizes to punctate structures beneath the plasma membrane (By similarity). Recruited to the cell membrane in association with CYTH2 and ARL4C. Colocalizes with DAB2IP at the plasma membrane and endocytic vesicles. Myristoylation is required for proper localization to membranes (By similarity).</text>
</comment>
<comment type="developmental stage">
    <text evidence="3">In 3 days embryos.</text>
</comment>
<comment type="similarity">
    <text evidence="5">Belongs to the small GTPase superfamily. Arf family.</text>
</comment>
<protein>
    <recommendedName>
        <fullName>ADP-ribosylation factor 6</fullName>
        <ecNumber evidence="1">3.6.5.2</ecNumber>
    </recommendedName>
</protein>
<name>ARF6_CHICK</name>
<organism>
    <name type="scientific">Gallus gallus</name>
    <name type="common">Chicken</name>
    <dbReference type="NCBI Taxonomy" id="9031"/>
    <lineage>
        <taxon>Eukaryota</taxon>
        <taxon>Metazoa</taxon>
        <taxon>Chordata</taxon>
        <taxon>Craniata</taxon>
        <taxon>Vertebrata</taxon>
        <taxon>Euteleostomi</taxon>
        <taxon>Archelosauria</taxon>
        <taxon>Archosauria</taxon>
        <taxon>Dinosauria</taxon>
        <taxon>Saurischia</taxon>
        <taxon>Theropoda</taxon>
        <taxon>Coelurosauria</taxon>
        <taxon>Aves</taxon>
        <taxon>Neognathae</taxon>
        <taxon>Galloanserae</taxon>
        <taxon>Galliformes</taxon>
        <taxon>Phasianidae</taxon>
        <taxon>Phasianinae</taxon>
        <taxon>Gallus</taxon>
    </lineage>
</organism>
<proteinExistence type="evidence at transcript level"/>